<evidence type="ECO:0000250" key="1">
    <source>
        <dbReference type="UniProtKB" id="P23677"/>
    </source>
</evidence>
<evidence type="ECO:0000269" key="2">
    <source>
    </source>
</evidence>
<evidence type="ECO:0000269" key="3">
    <source>
    </source>
</evidence>
<evidence type="ECO:0000269" key="4">
    <source>
    </source>
</evidence>
<evidence type="ECO:0000303" key="5">
    <source>
    </source>
</evidence>
<evidence type="ECO:0000305" key="6"/>
<evidence type="ECO:0000312" key="7">
    <source>
        <dbReference type="EMBL" id="AAC38960.1"/>
    </source>
</evidence>
<evidence type="ECO:0000312" key="8">
    <source>
        <dbReference type="Proteomes" id="UP000001940"/>
    </source>
</evidence>
<evidence type="ECO:0000312" key="9">
    <source>
        <dbReference type="WormBase" id="C46H11.4a"/>
    </source>
</evidence>
<evidence type="ECO:0000312" key="10">
    <source>
        <dbReference type="WormBase" id="C46H11.4b"/>
    </source>
</evidence>
<evidence type="ECO:0000312" key="11">
    <source>
        <dbReference type="WormBase" id="C46H11.4c"/>
    </source>
</evidence>
<evidence type="ECO:0000312" key="12">
    <source>
        <dbReference type="WormBase" id="C46H11.4e"/>
    </source>
</evidence>
<evidence type="ECO:0000312" key="13">
    <source>
        <dbReference type="WormBase" id="C46H11.4f"/>
    </source>
</evidence>
<name>IP3KH_CAEEL</name>
<gene>
    <name evidence="9" type="primary">lfe-2</name>
    <name evidence="9" type="ORF">C46H11.4</name>
</gene>
<accession>Q95Q62</accession>
<accession>H2KZ42</accession>
<accession>H2KZ43</accession>
<accession>H2KZ45</accession>
<accession>H2KZ46</accession>
<accession>H2KZ47</accession>
<accession>O45049</accession>
<accession>O45050</accession>
<accession>O45051</accession>
<sequence>MHTQPQSYQAPEQTHMRIENRRIEAGKGGTNLLLIIESRVDTLSINLPTLYSLLFTTNITILMSAPQHRQLRRAAHITKIASIDLCSLEEEDHEDLVLEESGHHPSDIQNEKPNRPPYSTLIRKRSGKVFRFVRPKLADLWHSRYHEASFDLGRRLGIGRRTQSCCEDVCDEEVSVETMAITALPMDVWLKERLKKWVQLSGHEGSIVPATPHTLYKKQCANCGEGRAYKNISKDPALDGFTPKYYDELEKNEEHFIEIEDLLQQFHDPTKTAIMDIKIGTRTFLESEVSNTKKRADLYEKMVAIDNDEPTEEERKCGAITKLRYMQFRERESSTAQLGFRIEAAKRLEGALEKNFKKVRTVEDVTTTFMDFFGTQRSRVRQQLIERLKSMRKAIEHSSFFNSHEVVGSSILIVFDTEKVGCWMIDFAKSSPVPNGRTLNHRTTWIPGNNEDGYLIGIDNLVKILEELPEYGEHPDDQLMVTEEVIARMKNTKS</sequence>
<proteinExistence type="evidence at protein level"/>
<dbReference type="EC" id="2.7.1.127" evidence="4"/>
<dbReference type="EMBL" id="AF045611">
    <property type="protein sequence ID" value="AAC38960.1"/>
    <property type="molecule type" value="mRNA"/>
</dbReference>
<dbReference type="EMBL" id="AF045612">
    <property type="protein sequence ID" value="AAC38961.1"/>
    <property type="molecule type" value="mRNA"/>
</dbReference>
<dbReference type="EMBL" id="AF045613">
    <property type="protein sequence ID" value="AAC38962.1"/>
    <property type="molecule type" value="mRNA"/>
</dbReference>
<dbReference type="EMBL" id="BX284601">
    <property type="protein sequence ID" value="CCD66218.1"/>
    <property type="molecule type" value="Genomic_DNA"/>
</dbReference>
<dbReference type="EMBL" id="BX284601">
    <property type="protein sequence ID" value="CCD66219.1"/>
    <property type="molecule type" value="Genomic_DNA"/>
</dbReference>
<dbReference type="EMBL" id="BX284601">
    <property type="protein sequence ID" value="CCD66220.1"/>
    <property type="molecule type" value="Genomic_DNA"/>
</dbReference>
<dbReference type="EMBL" id="BX284601">
    <property type="protein sequence ID" value="CCD66228.1"/>
    <property type="molecule type" value="Genomic_DNA"/>
</dbReference>
<dbReference type="EMBL" id="BX284601">
    <property type="protein sequence ID" value="CCD66229.1"/>
    <property type="molecule type" value="Genomic_DNA"/>
</dbReference>
<dbReference type="EMBL" id="BX284601">
    <property type="protein sequence ID" value="CCD66230.1"/>
    <property type="molecule type" value="Genomic_DNA"/>
</dbReference>
<dbReference type="PIR" id="T42444">
    <property type="entry name" value="T42444"/>
</dbReference>
<dbReference type="PIR" id="T42512">
    <property type="entry name" value="T42512"/>
</dbReference>
<dbReference type="PIR" id="T42513">
    <property type="entry name" value="T42513"/>
</dbReference>
<dbReference type="RefSeq" id="NP_001021047.1">
    <molecule id="Q95Q62-1"/>
    <property type="nucleotide sequence ID" value="NM_001025876.5"/>
</dbReference>
<dbReference type="RefSeq" id="NP_001021048.1">
    <molecule id="Q95Q62-2"/>
    <property type="nucleotide sequence ID" value="NM_001025877.6"/>
</dbReference>
<dbReference type="RefSeq" id="NP_001021049.1">
    <molecule id="Q95Q62-3"/>
    <property type="nucleotide sequence ID" value="NM_001025878.8"/>
</dbReference>
<dbReference type="RefSeq" id="NP_001249776.1">
    <property type="nucleotide sequence ID" value="NM_001262847.1"/>
</dbReference>
<dbReference type="RefSeq" id="NP_001249778.1">
    <molecule id="Q95Q62-5"/>
    <property type="nucleotide sequence ID" value="NM_001262849.3"/>
</dbReference>
<dbReference type="RefSeq" id="NP_001249779.1">
    <property type="nucleotide sequence ID" value="NM_001262850.1"/>
</dbReference>
<dbReference type="SMR" id="Q95Q62"/>
<dbReference type="FunCoup" id="Q95Q62">
    <property type="interactions" value="1280"/>
</dbReference>
<dbReference type="IntAct" id="Q95Q62">
    <property type="interactions" value="1"/>
</dbReference>
<dbReference type="MINT" id="Q95Q62"/>
<dbReference type="STRING" id="6239.C46H11.4a.1"/>
<dbReference type="PaxDb" id="6239-C46H11.4a"/>
<dbReference type="EnsemblMetazoa" id="C46H11.4a.1">
    <molecule id="Q95Q62-1"/>
    <property type="protein sequence ID" value="C46H11.4a.1"/>
    <property type="gene ID" value="WBGene00002979"/>
</dbReference>
<dbReference type="EnsemblMetazoa" id="C46H11.4b.1">
    <molecule id="Q95Q62-2"/>
    <property type="protein sequence ID" value="C46H11.4b.1"/>
    <property type="gene ID" value="WBGene00002979"/>
</dbReference>
<dbReference type="EnsemblMetazoa" id="C46H11.4c.1">
    <molecule id="Q95Q62-3"/>
    <property type="protein sequence ID" value="C46H11.4c.1"/>
    <property type="gene ID" value="WBGene00002979"/>
</dbReference>
<dbReference type="EnsemblMetazoa" id="C46H11.4e.1">
    <molecule id="Q95Q62-5"/>
    <property type="protein sequence ID" value="C46H11.4e.1"/>
    <property type="gene ID" value="WBGene00002979"/>
</dbReference>
<dbReference type="EnsemblMetazoa" id="C46H11.4f.1">
    <property type="protein sequence ID" value="C46H11.4f.1"/>
    <property type="gene ID" value="WBGene00002979"/>
</dbReference>
<dbReference type="EnsemblMetazoa" id="C46H11.4f.2">
    <property type="protein sequence ID" value="C46H11.4f.2"/>
    <property type="gene ID" value="WBGene00002979"/>
</dbReference>
<dbReference type="GeneID" id="172128"/>
<dbReference type="KEGG" id="cel:CELE_C46H11.4"/>
<dbReference type="UCSC" id="C46H11.4c">
    <molecule id="Q95Q62-1"/>
    <property type="organism name" value="c. elegans"/>
</dbReference>
<dbReference type="AGR" id="WB:WBGene00002979"/>
<dbReference type="CTD" id="172128"/>
<dbReference type="WormBase" id="C46H11.4a">
    <molecule id="Q95Q62-1"/>
    <property type="protein sequence ID" value="CE27862"/>
    <property type="gene ID" value="WBGene00002979"/>
    <property type="gene designation" value="lfe-2"/>
</dbReference>
<dbReference type="WormBase" id="C46H11.4b">
    <molecule id="Q95Q62-2"/>
    <property type="protein sequence ID" value="CE27863"/>
    <property type="gene ID" value="WBGene00002979"/>
    <property type="gene designation" value="lfe-2"/>
</dbReference>
<dbReference type="WormBase" id="C46H11.4c">
    <molecule id="Q95Q62-3"/>
    <property type="protein sequence ID" value="CE27864"/>
    <property type="gene ID" value="WBGene00002979"/>
    <property type="gene designation" value="lfe-2"/>
</dbReference>
<dbReference type="WormBase" id="C46H11.4e">
    <molecule id="Q95Q62-5"/>
    <property type="protein sequence ID" value="CE43449"/>
    <property type="gene ID" value="WBGene00002979"/>
    <property type="gene designation" value="lfe-2"/>
</dbReference>
<dbReference type="WormBase" id="C46H11.4f">
    <molecule id="Q95Q62-6"/>
    <property type="protein sequence ID" value="CE52138"/>
    <property type="gene ID" value="WBGene00002979"/>
    <property type="gene designation" value="lfe-2"/>
</dbReference>
<dbReference type="eggNOG" id="KOG1621">
    <property type="taxonomic scope" value="Eukaryota"/>
</dbReference>
<dbReference type="GeneTree" id="ENSGT00940000173539"/>
<dbReference type="HOGENOM" id="CLU_552348_0_0_1"/>
<dbReference type="InParanoid" id="Q95Q62"/>
<dbReference type="OMA" id="HIQSQDP"/>
<dbReference type="OrthoDB" id="338650at2759"/>
<dbReference type="PhylomeDB" id="Q95Q62"/>
<dbReference type="Reactome" id="R-CEL-1855204">
    <property type="pathway name" value="Synthesis of IP3 and IP4 in the cytosol"/>
</dbReference>
<dbReference type="PRO" id="PR:Q95Q62"/>
<dbReference type="Proteomes" id="UP000001940">
    <property type="component" value="Chromosome I"/>
</dbReference>
<dbReference type="Bgee" id="WBGene00002979">
    <property type="expression patterns" value="Expressed in larva and 4 other cell types or tissues"/>
</dbReference>
<dbReference type="GO" id="GO:0005737">
    <property type="term" value="C:cytoplasm"/>
    <property type="evidence" value="ECO:0000318"/>
    <property type="project" value="GO_Central"/>
</dbReference>
<dbReference type="GO" id="GO:0005634">
    <property type="term" value="C:nucleus"/>
    <property type="evidence" value="ECO:0000318"/>
    <property type="project" value="GO_Central"/>
</dbReference>
<dbReference type="GO" id="GO:0005524">
    <property type="term" value="F:ATP binding"/>
    <property type="evidence" value="ECO:0007669"/>
    <property type="project" value="UniProtKB-KW"/>
</dbReference>
<dbReference type="GO" id="GO:0000828">
    <property type="term" value="F:inositol hexakisphosphate kinase activity"/>
    <property type="evidence" value="ECO:0000318"/>
    <property type="project" value="GO_Central"/>
</dbReference>
<dbReference type="GO" id="GO:0008440">
    <property type="term" value="F:inositol-1,4,5-trisphosphate 3-kinase activity"/>
    <property type="evidence" value="ECO:0007669"/>
    <property type="project" value="UniProtKB-EC"/>
</dbReference>
<dbReference type="GO" id="GO:0032958">
    <property type="term" value="P:inositol phosphate biosynthetic process"/>
    <property type="evidence" value="ECO:0000318"/>
    <property type="project" value="GO_Central"/>
</dbReference>
<dbReference type="GO" id="GO:0046854">
    <property type="term" value="P:phosphatidylinositol phosphate biosynthetic process"/>
    <property type="evidence" value="ECO:0000318"/>
    <property type="project" value="GO_Central"/>
</dbReference>
<dbReference type="FunFam" id="3.30.470.160:FF:000001">
    <property type="entry name" value="Kinase"/>
    <property type="match status" value="1"/>
</dbReference>
<dbReference type="Gene3D" id="3.30.470.160">
    <property type="entry name" value="Inositol polyphosphate kinase"/>
    <property type="match status" value="1"/>
</dbReference>
<dbReference type="InterPro" id="IPR005522">
    <property type="entry name" value="IPK"/>
</dbReference>
<dbReference type="InterPro" id="IPR038286">
    <property type="entry name" value="IPK_sf"/>
</dbReference>
<dbReference type="PANTHER" id="PTHR12400">
    <property type="entry name" value="INOSITOL POLYPHOSPHATE KINASE"/>
    <property type="match status" value="1"/>
</dbReference>
<dbReference type="PANTHER" id="PTHR12400:SF26">
    <property type="entry name" value="KINASE"/>
    <property type="match status" value="1"/>
</dbReference>
<dbReference type="Pfam" id="PF03770">
    <property type="entry name" value="IPK"/>
    <property type="match status" value="1"/>
</dbReference>
<dbReference type="SUPFAM" id="SSF56104">
    <property type="entry name" value="SAICAR synthase-like"/>
    <property type="match status" value="1"/>
</dbReference>
<protein>
    <recommendedName>
        <fullName evidence="6">Inositol-trisphosphate 3-kinase homolog</fullName>
        <ecNumber evidence="4">2.7.1.127</ecNumber>
    </recommendedName>
    <alternativeName>
        <fullName evidence="5">Inositol 1,4,5-trisphosphate 3-kinase homolog</fullName>
        <shortName evidence="6">IP3 3-kinase</shortName>
        <shortName evidence="6">IP3K</shortName>
        <shortName evidence="6">InsP 3-kinase</shortName>
    </alternativeName>
    <alternativeName>
        <fullName evidence="5">let-23 fertility effector 2</fullName>
    </alternativeName>
</protein>
<organism evidence="8">
    <name type="scientific">Caenorhabditis elegans</name>
    <dbReference type="NCBI Taxonomy" id="6239"/>
    <lineage>
        <taxon>Eukaryota</taxon>
        <taxon>Metazoa</taxon>
        <taxon>Ecdysozoa</taxon>
        <taxon>Nematoda</taxon>
        <taxon>Chromadorea</taxon>
        <taxon>Rhabditida</taxon>
        <taxon>Rhabditina</taxon>
        <taxon>Rhabditomorpha</taxon>
        <taxon>Rhabditoidea</taxon>
        <taxon>Rhabditidae</taxon>
        <taxon>Peloderinae</taxon>
        <taxon>Caenorhabditis</taxon>
    </lineage>
</organism>
<feature type="chain" id="PRO_0000437981" description="Inositol-trisphosphate 3-kinase homolog" evidence="6">
    <location>
        <begin position="1"/>
        <end position="494"/>
    </location>
</feature>
<feature type="binding site" evidence="1">
    <location>
        <position position="206"/>
    </location>
    <ligand>
        <name>ATP</name>
        <dbReference type="ChEBI" id="CHEBI:30616"/>
    </ligand>
</feature>
<feature type="binding site" evidence="1">
    <location>
        <position position="218"/>
    </location>
    <ligand>
        <name>ATP</name>
        <dbReference type="ChEBI" id="CHEBI:30616"/>
    </ligand>
</feature>
<feature type="binding site" evidence="1">
    <location>
        <begin position="260"/>
        <end position="262"/>
    </location>
    <ligand>
        <name>ATP</name>
        <dbReference type="ChEBI" id="CHEBI:30616"/>
    </ligand>
</feature>
<feature type="binding site" evidence="1">
    <location>
        <position position="276"/>
    </location>
    <ligand>
        <name>ATP</name>
        <dbReference type="ChEBI" id="CHEBI:30616"/>
    </ligand>
</feature>
<feature type="binding site" evidence="1">
    <location>
        <position position="278"/>
    </location>
    <ligand>
        <name>substrate</name>
    </ligand>
</feature>
<feature type="binding site" evidence="1">
    <location>
        <begin position="322"/>
        <end position="329"/>
    </location>
    <ligand>
        <name>substrate</name>
    </ligand>
</feature>
<feature type="binding site" evidence="1">
    <location>
        <position position="346"/>
    </location>
    <ligand>
        <name>ATP</name>
        <dbReference type="ChEBI" id="CHEBI:30616"/>
    </ligand>
</feature>
<feature type="binding site" evidence="1">
    <location>
        <position position="426"/>
    </location>
    <ligand>
        <name>ATP</name>
        <dbReference type="ChEBI" id="CHEBI:30616"/>
    </ligand>
</feature>
<feature type="binding site" evidence="1">
    <location>
        <position position="429"/>
    </location>
    <ligand>
        <name>substrate</name>
    </ligand>
</feature>
<feature type="splice variant" id="VSP_058582" description="In isoform b." evidence="6">
    <original>MHTQPQSYQAPEQTHMRIENRRIEAGKGGTNLLLIIESRVDTLSINLPTLYSLLFTTNITILMSAPQHRQLRRAAHITKIASIDLCSLEEEDHEDLVLEESGHHPSDIQNEKPNRPPYSTLIRKRSGKVFRFVRPKLADLWHSRYHEASFDLGRRLGIGRRTQSCCEDVCDEE</original>
    <variation>MTTLFEKLAELMLMDTDKYSPQKSRLFKRMAANIISCFPYPTTRPASPQCLPKPSPESCEHRAFCDAFGKLVQ</variation>
    <location>
        <begin position="1"/>
        <end position="173"/>
    </location>
</feature>
<feature type="splice variant" id="VSP_058583" description="In isoform c." evidence="6">
    <original>MHTQPQSYQAPEQTHMRIENRRIEAGKGGTNLLLIIESRVDTLSINLPTLYSLLFTTNITILMSAPQHRQLRRAAHITKIASIDLCSLEEEDHEDLVLEESGHHPSDIQNEKPNRPPYSTLIRKRSGKVFRFVRPKLADLWHSRYHEASFDLGRRLGIGRRTQSCCEDVCDEE</original>
    <variation>MLEAIYAKIMGVGTSRHDKRQGCWSWGGSSNSEEKRMKRPKKLPSKLRLKISGNQRRRRDDTFVVWEEIPTPSVCDHRDTMNSEASSSPPSAPTQERLMQIISCFPYPTTRPASPQCLPKPSPESCEHRAFCDAFGKLVQ</variation>
    <location>
        <begin position="1"/>
        <end position="173"/>
    </location>
</feature>
<feature type="splice variant" id="VSP_058585" description="In isoform f." evidence="6">
    <original>MHTQPQSYQAPEQTHMRIENRRIEAGKGGTNLLLIIESRVDTLSINLPTLYSLLFTTNITILMSAPQHRQLRRAAHITKIASIDLCSLEEEDHEDLVLEESGHHPSDIQNEKPNRPPYSTLIRKRSGKVFRFVRPKLADLWHSRYHEASFDLGRRLGIGRRTQSCCEDVCDEE</original>
    <variation>MNYAHSASEKKSENKTLKKKGHIARSSNSEEKRMKRPKKLPSKLRLKISGNQRRRRDDTFVVWEEIPTPSVCDHRDTMNSEASSSPPSAPTQERLMQIISCFPYPTTRPASPQCLPKPSPESCEHRAFCDAFGKLVQ</variation>
    <location>
        <begin position="1"/>
        <end position="173"/>
    </location>
</feature>
<feature type="splice variant" id="VSP_058586" description="In isoform e." evidence="6">
    <original>HTQPQSYQAPEQTHMRIENRRIEAGKGGTNLLLIIESRVDTLSINLPTLYSLLFTTNITILMSAPQHRQLRRAAHITKIASIDLCSLEEEDHEDLVLEESGHHPSDIQNEKPNRPPYSTLIRKRSGKVFRFVRPKLADLWHSRYHEASFDLGRRLGIGRRTQSCCEDVCDEE</original>
    <variation>SLSNRVRAHLVRSLLYIYTFIMGVGTSRHDKRQGCWSWGGSSNSEEKRMKRPKKLPSKLRLKISGNQRRRRDDTFVVWEEIPTPSVCDHRDTMNSEASSSPPSAPTQERLMQIISCFPYPTTRPASPQCLPKPSPESCEHRAFCDAFGKLVQ</variation>
    <location>
        <begin position="2"/>
        <end position="173"/>
    </location>
</feature>
<feature type="sequence conflict" description="In Ref. 1; AAC38960/AAC38961/AAC38962." evidence="6" ref="1">
    <original>R</original>
    <variation>T</variation>
    <location>
        <position position="488"/>
    </location>
</feature>
<reference evidence="7" key="1">
    <citation type="journal article" date="1998" name="Cell">
        <title>Inositol trisphosphate mediates a RAS-independent response to LET-23 receptor tyrosine kinase activation in C. elegans.</title>
        <authorList>
            <person name="Clandinin T.R."/>
            <person name="DeModena J.A."/>
            <person name="Sternberg P.W."/>
        </authorList>
    </citation>
    <scope>NUCLEOTIDE SEQUENCE [MRNA]</scope>
    <scope>FUNCTION</scope>
    <scope>CATALYTIC ACTIVITY</scope>
    <scope>ACTIVITY REGULATION</scope>
    <scope>TISSUE SPECIFICITY</scope>
</reference>
<reference evidence="8" key="2">
    <citation type="journal article" date="1998" name="Science">
        <title>Genome sequence of the nematode C. elegans: a platform for investigating biology.</title>
        <authorList>
            <consortium name="The C. elegans sequencing consortium"/>
        </authorList>
    </citation>
    <scope>NUCLEOTIDE SEQUENCE [LARGE SCALE GENOMIC DNA]</scope>
    <source>
        <strain evidence="8">Bristol N2</strain>
    </source>
</reference>
<reference evidence="6" key="3">
    <citation type="journal article" date="2005" name="J. Gen. Physiol.">
        <title>Oscillatory Ca2+ signaling in the isolated Caenorhabditis elegans intestine: role of the inositol-1,4,5-trisphosphate receptor and phospholipases C beta and gamma.</title>
        <authorList>
            <person name="Espelt M.V."/>
            <person name="Estevez A.Y."/>
            <person name="Yin X."/>
            <person name="Strange K."/>
        </authorList>
    </citation>
    <scope>FUNCTION</scope>
</reference>
<reference evidence="6" key="4">
    <citation type="journal article" date="2007" name="Bioinformation">
        <title>Computational and molecular characterization of multiple isoforms of lfe-2 gene in nematode C. elegans.</title>
        <authorList>
            <person name="Kashyap L."/>
            <person name="Tabish M."/>
            <person name="Ganesh G."/>
            <person name="Dubey D."/>
        </authorList>
    </citation>
    <scope>ALTERNATIVE SPLICING (ISOFORMS C; D; E AND F)</scope>
</reference>
<reference evidence="6" key="5">
    <citation type="journal article" date="2013" name="PLoS Genet.">
        <title>Filamin and phospholipase C-epsilon are required for calcium signaling in the Caenorhabditis elegans spermatheca.</title>
        <authorList>
            <person name="Kovacevic I."/>
            <person name="Orozco J.M."/>
            <person name="Cram E.J."/>
        </authorList>
    </citation>
    <scope>FUNCTION</scope>
</reference>
<keyword id="KW-0025">Alternative splicing</keyword>
<keyword id="KW-0067">ATP-binding</keyword>
<keyword id="KW-0418">Kinase</keyword>
<keyword id="KW-0547">Nucleotide-binding</keyword>
<keyword id="KW-1185">Reference proteome</keyword>
<keyword id="KW-0808">Transferase</keyword>
<comment type="function">
    <text evidence="2 3 4">Probably by regulating inositol 1,4,5-trisphosphate levels, negatively regulates posterior body wall muscle contractions required for defecation and let-23 signaling pathway that controls spermathecal dilation and ovulation (PubMed:16186564, PubMed:9491893). May also regulate ovulation downstream of actin cross-linker fln-1 (PubMed:23671426).</text>
</comment>
<comment type="catalytic activity">
    <reaction evidence="4">
        <text>1D-myo-inositol 1,4,5-trisphosphate + ATP = 1D-myo-inositol 1,3,4,5-tetrakisphosphate + ADP + H(+)</text>
        <dbReference type="Rhea" id="RHEA:11020"/>
        <dbReference type="ChEBI" id="CHEBI:15378"/>
        <dbReference type="ChEBI" id="CHEBI:30616"/>
        <dbReference type="ChEBI" id="CHEBI:57895"/>
        <dbReference type="ChEBI" id="CHEBI:203600"/>
        <dbReference type="ChEBI" id="CHEBI:456216"/>
        <dbReference type="EC" id="2.7.1.127"/>
    </reaction>
</comment>
<comment type="activity regulation">
    <text evidence="5">Unlike mammalian IP3K, may not be regulated by calmodulin.</text>
</comment>
<comment type="alternative products">
    <event type="alternative splicing"/>
    <isoform>
        <id>Q95Q62-1</id>
        <name evidence="9">a</name>
        <sequence type="displayed"/>
    </isoform>
    <isoform>
        <id>Q95Q62-2</id>
        <name evidence="10">b</name>
        <sequence type="described" ref="VSP_058582"/>
    </isoform>
    <isoform>
        <id>Q95Q62-3</id>
        <name evidence="11">c</name>
        <sequence type="described" ref="VSP_058583"/>
    </isoform>
    <isoform>
        <id>Q95Q62-5</id>
        <name evidence="12">e</name>
        <sequence type="described" ref="VSP_058586"/>
    </isoform>
    <isoform>
        <id>Q95Q62-6</id>
        <name evidence="13">f</name>
        <sequence type="described" ref="VSP_058585"/>
    </isoform>
</comment>
<comment type="tissue specificity">
    <text evidence="4">Expressed in spermatheca.</text>
</comment>
<comment type="similarity">
    <text evidence="6">Belongs to the inositol phosphokinase (IPK) family.</text>
</comment>